<proteinExistence type="inferred from homology"/>
<accession>A8G6Z5</accession>
<protein>
    <recommendedName>
        <fullName evidence="2">Translation initiation factor IF-2</fullName>
    </recommendedName>
</protein>
<sequence length="1119" mass="122886">MTISDKIRIYELSRDLNLDNKDILGAAQKLSISVKSHSSSISAEEAEKIKNLINKKNPDKKILSIKKPSIKKDNYKQNKEDKSSLISSVEEKPFKDNPEKKPLLKKPLNKPESLKIISNQPKSLNKPTITNSSQSQANLTNQNLNSKTSQNLNQDKRNFRNNLTPPIKSPTKPPIQLIAKPKNTTKNVQSNESSQNILNSGGGRQISNKPDQNSSKSKTKNINNRMSPPELVGAPIRREGPNKQNNKQKTSFKQTVPNRPGMLNRPGLRNKPSDQGRPGSFNRQTNTNRPGAPSSNKPGMPNRPGLRNKPSDQGRPGSFNRQVNTNRSGAPIRPGMPNRPGSKFNGPKSPGMRKPVSPNELLKLQKTNKSENDKQVINNNEKQNSETTKQKVKAPNSRPHTAPNSKKLPHRTFSNNSKKPGKTDWDDSAKLEALRNKNPQKQRQKVRIIGENDDSLTSETSGYSGEKFSILSASLARPKKEKSDESKSQKTIKQFKKKKKETTRQRQKRRAMELKAAKEAKQIRPEMIIVPEDNLTVQELADKLSLESSEIIKSLFFKGITATVTQSLDLATIETVAEEFGVPVLQDDIQEAAEKTVDMIESEDLDNLIKRPPVITVMGHVDHGKTSLLDSIRESRVASGEAGGITQHIGAYQVEFEHESKKKKLTFLDTPGHEAFTAMRARGTKVTDVAVLVVAADDGCRPQTLEAISHARAAKVPIVVAINKIDKEGASPDRVKQELSEKNLIAEDWGGDTVMVPVSAIKKQNINKLLEMILLVSEVEDLQANPDRFAKGTVIEAHLDKAKGPVATLLVQNGTLKSGDVLAAGSVLGKIRAMVDEHGNRIKDAGPSFPVEALGFSEVPTAGDEFEVYPDEKTARAIVGERATDARATKLAQQMASRRVSLSSLSTQANDGELKELNLILKADVQGSVEAILGSLEQLPKNEVQVRVLLSAPGEITETDIDLAAASGSVIIGFNTSLASGAKKAADANDVDVREYEVIYKLLEDIQLAMEGLLEPDLVEESLGKAEVRATFSVGKGAIAGCYIQTGKLQRNCSLRVIRSEKVIFEGNLDSLKRSKDDVKEVNTGFECGVGCDKFSSWIEGDIIEAFKFVTKKRTLTQE</sequence>
<comment type="function">
    <text evidence="2">One of the essential components for the initiation of protein synthesis. Protects formylmethionyl-tRNA from spontaneous hydrolysis and promotes its binding to the 30S ribosomal subunits. Also involved in the hydrolysis of GTP during the formation of the 70S ribosomal complex.</text>
</comment>
<comment type="subcellular location">
    <subcellularLocation>
        <location evidence="2">Cytoplasm</location>
    </subcellularLocation>
</comment>
<comment type="similarity">
    <text evidence="2">Belongs to the TRAFAC class translation factor GTPase superfamily. Classic translation factor GTPase family. IF-2 subfamily.</text>
</comment>
<organism>
    <name type="scientific">Prochlorococcus marinus (strain MIT 9215)</name>
    <dbReference type="NCBI Taxonomy" id="93060"/>
    <lineage>
        <taxon>Bacteria</taxon>
        <taxon>Bacillati</taxon>
        <taxon>Cyanobacteriota</taxon>
        <taxon>Cyanophyceae</taxon>
        <taxon>Synechococcales</taxon>
        <taxon>Prochlorococcaceae</taxon>
        <taxon>Prochlorococcus</taxon>
    </lineage>
</organism>
<evidence type="ECO:0000250" key="1"/>
<evidence type="ECO:0000255" key="2">
    <source>
        <dbReference type="HAMAP-Rule" id="MF_00100"/>
    </source>
</evidence>
<evidence type="ECO:0000256" key="3">
    <source>
        <dbReference type="SAM" id="MobiDB-lite"/>
    </source>
</evidence>
<name>IF2_PROM2</name>
<dbReference type="EMBL" id="CP000825">
    <property type="protein sequence ID" value="ABV51376.1"/>
    <property type="molecule type" value="Genomic_DNA"/>
</dbReference>
<dbReference type="RefSeq" id="WP_012008392.1">
    <property type="nucleotide sequence ID" value="NC_009840.1"/>
</dbReference>
<dbReference type="SMR" id="A8G6Z5"/>
<dbReference type="STRING" id="93060.P9215_17631"/>
<dbReference type="KEGG" id="pmh:P9215_17631"/>
<dbReference type="eggNOG" id="COG0532">
    <property type="taxonomic scope" value="Bacteria"/>
</dbReference>
<dbReference type="HOGENOM" id="CLU_006301_7_0_3"/>
<dbReference type="OrthoDB" id="9811804at2"/>
<dbReference type="Proteomes" id="UP000002014">
    <property type="component" value="Chromosome"/>
</dbReference>
<dbReference type="GO" id="GO:0005829">
    <property type="term" value="C:cytosol"/>
    <property type="evidence" value="ECO:0007669"/>
    <property type="project" value="TreeGrafter"/>
</dbReference>
<dbReference type="GO" id="GO:0005525">
    <property type="term" value="F:GTP binding"/>
    <property type="evidence" value="ECO:0007669"/>
    <property type="project" value="UniProtKB-KW"/>
</dbReference>
<dbReference type="GO" id="GO:0003924">
    <property type="term" value="F:GTPase activity"/>
    <property type="evidence" value="ECO:0007669"/>
    <property type="project" value="UniProtKB-UniRule"/>
</dbReference>
<dbReference type="GO" id="GO:0003743">
    <property type="term" value="F:translation initiation factor activity"/>
    <property type="evidence" value="ECO:0007669"/>
    <property type="project" value="UniProtKB-UniRule"/>
</dbReference>
<dbReference type="CDD" id="cd01887">
    <property type="entry name" value="IF2_eIF5B"/>
    <property type="match status" value="1"/>
</dbReference>
<dbReference type="CDD" id="cd03702">
    <property type="entry name" value="IF2_mtIF2_II"/>
    <property type="match status" value="1"/>
</dbReference>
<dbReference type="CDD" id="cd03692">
    <property type="entry name" value="mtIF2_IVc"/>
    <property type="match status" value="1"/>
</dbReference>
<dbReference type="FunFam" id="2.40.30.10:FF:000007">
    <property type="entry name" value="Translation initiation factor IF-2"/>
    <property type="match status" value="1"/>
</dbReference>
<dbReference type="FunFam" id="2.40.30.10:FF:000008">
    <property type="entry name" value="Translation initiation factor IF-2"/>
    <property type="match status" value="1"/>
</dbReference>
<dbReference type="FunFam" id="3.40.50.10050:FF:000001">
    <property type="entry name" value="Translation initiation factor IF-2"/>
    <property type="match status" value="1"/>
</dbReference>
<dbReference type="FunFam" id="3.40.50.300:FF:000019">
    <property type="entry name" value="Translation initiation factor IF-2"/>
    <property type="match status" value="1"/>
</dbReference>
<dbReference type="Gene3D" id="1.10.10.2480">
    <property type="match status" value="1"/>
</dbReference>
<dbReference type="Gene3D" id="3.40.50.300">
    <property type="entry name" value="P-loop containing nucleotide triphosphate hydrolases"/>
    <property type="match status" value="1"/>
</dbReference>
<dbReference type="Gene3D" id="2.40.30.10">
    <property type="entry name" value="Translation factors"/>
    <property type="match status" value="2"/>
</dbReference>
<dbReference type="Gene3D" id="3.40.50.10050">
    <property type="entry name" value="Translation initiation factor IF- 2, domain 3"/>
    <property type="match status" value="1"/>
</dbReference>
<dbReference type="HAMAP" id="MF_00100_B">
    <property type="entry name" value="IF_2_B"/>
    <property type="match status" value="1"/>
</dbReference>
<dbReference type="InterPro" id="IPR053905">
    <property type="entry name" value="EF-G-like_DII"/>
</dbReference>
<dbReference type="InterPro" id="IPR044145">
    <property type="entry name" value="IF2_II"/>
</dbReference>
<dbReference type="InterPro" id="IPR006847">
    <property type="entry name" value="IF2_N"/>
</dbReference>
<dbReference type="InterPro" id="IPR027417">
    <property type="entry name" value="P-loop_NTPase"/>
</dbReference>
<dbReference type="InterPro" id="IPR005225">
    <property type="entry name" value="Small_GTP-bd"/>
</dbReference>
<dbReference type="InterPro" id="IPR000795">
    <property type="entry name" value="T_Tr_GTP-bd_dom"/>
</dbReference>
<dbReference type="InterPro" id="IPR000178">
    <property type="entry name" value="TF_IF2_bacterial-like"/>
</dbReference>
<dbReference type="InterPro" id="IPR015760">
    <property type="entry name" value="TIF_IF2"/>
</dbReference>
<dbReference type="InterPro" id="IPR023115">
    <property type="entry name" value="TIF_IF2_dom3"/>
</dbReference>
<dbReference type="InterPro" id="IPR036925">
    <property type="entry name" value="TIF_IF2_dom3_sf"/>
</dbReference>
<dbReference type="InterPro" id="IPR009000">
    <property type="entry name" value="Transl_B-barrel_sf"/>
</dbReference>
<dbReference type="NCBIfam" id="TIGR00487">
    <property type="entry name" value="IF-2"/>
    <property type="match status" value="1"/>
</dbReference>
<dbReference type="NCBIfam" id="TIGR00231">
    <property type="entry name" value="small_GTP"/>
    <property type="match status" value="1"/>
</dbReference>
<dbReference type="PANTHER" id="PTHR43381:SF5">
    <property type="entry name" value="TR-TYPE G DOMAIN-CONTAINING PROTEIN"/>
    <property type="match status" value="1"/>
</dbReference>
<dbReference type="PANTHER" id="PTHR43381">
    <property type="entry name" value="TRANSLATION INITIATION FACTOR IF-2-RELATED"/>
    <property type="match status" value="1"/>
</dbReference>
<dbReference type="Pfam" id="PF22042">
    <property type="entry name" value="EF-G_D2"/>
    <property type="match status" value="1"/>
</dbReference>
<dbReference type="Pfam" id="PF00009">
    <property type="entry name" value="GTP_EFTU"/>
    <property type="match status" value="1"/>
</dbReference>
<dbReference type="Pfam" id="PF11987">
    <property type="entry name" value="IF-2"/>
    <property type="match status" value="1"/>
</dbReference>
<dbReference type="Pfam" id="PF04760">
    <property type="entry name" value="IF2_N"/>
    <property type="match status" value="2"/>
</dbReference>
<dbReference type="PRINTS" id="PR00315">
    <property type="entry name" value="ELONGATNFCT"/>
</dbReference>
<dbReference type="SUPFAM" id="SSF52156">
    <property type="entry name" value="Initiation factor IF2/eIF5b, domain 3"/>
    <property type="match status" value="1"/>
</dbReference>
<dbReference type="SUPFAM" id="SSF52540">
    <property type="entry name" value="P-loop containing nucleoside triphosphate hydrolases"/>
    <property type="match status" value="1"/>
</dbReference>
<dbReference type="SUPFAM" id="SSF50447">
    <property type="entry name" value="Translation proteins"/>
    <property type="match status" value="2"/>
</dbReference>
<dbReference type="PROSITE" id="PS51722">
    <property type="entry name" value="G_TR_2"/>
    <property type="match status" value="1"/>
</dbReference>
<dbReference type="PROSITE" id="PS01176">
    <property type="entry name" value="IF2"/>
    <property type="match status" value="1"/>
</dbReference>
<reference key="1">
    <citation type="journal article" date="2007" name="PLoS Genet.">
        <title>Patterns and implications of gene gain and loss in the evolution of Prochlorococcus.</title>
        <authorList>
            <person name="Kettler G.C."/>
            <person name="Martiny A.C."/>
            <person name="Huang K."/>
            <person name="Zucker J."/>
            <person name="Coleman M.L."/>
            <person name="Rodrigue S."/>
            <person name="Chen F."/>
            <person name="Lapidus A."/>
            <person name="Ferriera S."/>
            <person name="Johnson J."/>
            <person name="Steglich C."/>
            <person name="Church G.M."/>
            <person name="Richardson P."/>
            <person name="Chisholm S.W."/>
        </authorList>
    </citation>
    <scope>NUCLEOTIDE SEQUENCE [LARGE SCALE GENOMIC DNA]</scope>
    <source>
        <strain>MIT 9215</strain>
    </source>
</reference>
<gene>
    <name evidence="2" type="primary">infB</name>
    <name type="ordered locus">P9215_17631</name>
</gene>
<feature type="chain" id="PRO_1000057660" description="Translation initiation factor IF-2">
    <location>
        <begin position="1"/>
        <end position="1119"/>
    </location>
</feature>
<feature type="domain" description="tr-type G">
    <location>
        <begin position="610"/>
        <end position="782"/>
    </location>
</feature>
<feature type="region of interest" description="Disordered" evidence="3">
    <location>
        <begin position="64"/>
        <end position="463"/>
    </location>
</feature>
<feature type="region of interest" description="Disordered" evidence="3">
    <location>
        <begin position="477"/>
        <end position="507"/>
    </location>
</feature>
<feature type="region of interest" description="G1" evidence="1">
    <location>
        <begin position="619"/>
        <end position="626"/>
    </location>
</feature>
<feature type="region of interest" description="G2" evidence="1">
    <location>
        <begin position="644"/>
        <end position="648"/>
    </location>
</feature>
<feature type="region of interest" description="G3" evidence="1">
    <location>
        <begin position="669"/>
        <end position="672"/>
    </location>
</feature>
<feature type="region of interest" description="G4" evidence="1">
    <location>
        <begin position="723"/>
        <end position="726"/>
    </location>
</feature>
<feature type="region of interest" description="G5" evidence="1">
    <location>
        <begin position="759"/>
        <end position="761"/>
    </location>
</feature>
<feature type="compositionally biased region" description="Basic and acidic residues" evidence="3">
    <location>
        <begin position="70"/>
        <end position="102"/>
    </location>
</feature>
<feature type="compositionally biased region" description="Polar residues" evidence="3">
    <location>
        <begin position="116"/>
        <end position="153"/>
    </location>
</feature>
<feature type="compositionally biased region" description="Polar residues" evidence="3">
    <location>
        <begin position="182"/>
        <end position="212"/>
    </location>
</feature>
<feature type="compositionally biased region" description="Low complexity" evidence="3">
    <location>
        <begin position="213"/>
        <end position="224"/>
    </location>
</feature>
<feature type="compositionally biased region" description="Polar residues" evidence="3">
    <location>
        <begin position="242"/>
        <end position="257"/>
    </location>
</feature>
<feature type="compositionally biased region" description="Polar residues" evidence="3">
    <location>
        <begin position="281"/>
        <end position="297"/>
    </location>
</feature>
<feature type="compositionally biased region" description="Polar residues" evidence="3">
    <location>
        <begin position="319"/>
        <end position="328"/>
    </location>
</feature>
<feature type="compositionally biased region" description="Polar residues" evidence="3">
    <location>
        <begin position="375"/>
        <end position="387"/>
    </location>
</feature>
<feature type="compositionally biased region" description="Basic and acidic residues" evidence="3">
    <location>
        <begin position="421"/>
        <end position="435"/>
    </location>
</feature>
<feature type="compositionally biased region" description="Basic residues" evidence="3">
    <location>
        <begin position="493"/>
        <end position="507"/>
    </location>
</feature>
<feature type="binding site" evidence="2">
    <location>
        <begin position="619"/>
        <end position="626"/>
    </location>
    <ligand>
        <name>GTP</name>
        <dbReference type="ChEBI" id="CHEBI:37565"/>
    </ligand>
</feature>
<feature type="binding site" evidence="2">
    <location>
        <begin position="669"/>
        <end position="673"/>
    </location>
    <ligand>
        <name>GTP</name>
        <dbReference type="ChEBI" id="CHEBI:37565"/>
    </ligand>
</feature>
<feature type="binding site" evidence="2">
    <location>
        <begin position="723"/>
        <end position="726"/>
    </location>
    <ligand>
        <name>GTP</name>
        <dbReference type="ChEBI" id="CHEBI:37565"/>
    </ligand>
</feature>
<keyword id="KW-0963">Cytoplasm</keyword>
<keyword id="KW-0342">GTP-binding</keyword>
<keyword id="KW-0396">Initiation factor</keyword>
<keyword id="KW-0547">Nucleotide-binding</keyword>
<keyword id="KW-0648">Protein biosynthesis</keyword>